<protein>
    <recommendedName>
        <fullName evidence="1">Bifunctional purine biosynthesis protein PurH</fullName>
    </recommendedName>
    <domain>
        <recommendedName>
            <fullName evidence="1">Phosphoribosylaminoimidazolecarboxamide formyltransferase</fullName>
            <ecNumber evidence="1">2.1.2.3</ecNumber>
        </recommendedName>
        <alternativeName>
            <fullName evidence="1">AICAR transformylase</fullName>
        </alternativeName>
    </domain>
    <domain>
        <recommendedName>
            <fullName evidence="1">IMP cyclohydrolase</fullName>
            <ecNumber evidence="1">3.5.4.10</ecNumber>
        </recommendedName>
        <alternativeName>
            <fullName evidence="1">ATIC</fullName>
        </alternativeName>
        <alternativeName>
            <fullName evidence="1">IMP synthase</fullName>
        </alternativeName>
        <alternativeName>
            <fullName evidence="1">Inosinicase</fullName>
        </alternativeName>
    </domain>
</protein>
<keyword id="KW-0378">Hydrolase</keyword>
<keyword id="KW-0511">Multifunctional enzyme</keyword>
<keyword id="KW-0658">Purine biosynthesis</keyword>
<keyword id="KW-0808">Transferase</keyword>
<accession>Q8KA70</accession>
<evidence type="ECO:0000255" key="1">
    <source>
        <dbReference type="HAMAP-Rule" id="MF_00139"/>
    </source>
</evidence>
<evidence type="ECO:0000255" key="2">
    <source>
        <dbReference type="PROSITE-ProRule" id="PRU01202"/>
    </source>
</evidence>
<proteinExistence type="inferred from homology"/>
<gene>
    <name evidence="1" type="primary">purH</name>
    <name type="ordered locus">BUsg_032</name>
</gene>
<name>PUR9_BUCAP</name>
<comment type="catalytic activity">
    <reaction evidence="1">
        <text>(6R)-10-formyltetrahydrofolate + 5-amino-1-(5-phospho-beta-D-ribosyl)imidazole-4-carboxamide = 5-formamido-1-(5-phospho-D-ribosyl)imidazole-4-carboxamide + (6S)-5,6,7,8-tetrahydrofolate</text>
        <dbReference type="Rhea" id="RHEA:22192"/>
        <dbReference type="ChEBI" id="CHEBI:57453"/>
        <dbReference type="ChEBI" id="CHEBI:58467"/>
        <dbReference type="ChEBI" id="CHEBI:58475"/>
        <dbReference type="ChEBI" id="CHEBI:195366"/>
        <dbReference type="EC" id="2.1.2.3"/>
    </reaction>
</comment>
<comment type="catalytic activity">
    <reaction evidence="1">
        <text>IMP + H2O = 5-formamido-1-(5-phospho-D-ribosyl)imidazole-4-carboxamide</text>
        <dbReference type="Rhea" id="RHEA:18445"/>
        <dbReference type="ChEBI" id="CHEBI:15377"/>
        <dbReference type="ChEBI" id="CHEBI:58053"/>
        <dbReference type="ChEBI" id="CHEBI:58467"/>
        <dbReference type="EC" id="3.5.4.10"/>
    </reaction>
</comment>
<comment type="pathway">
    <text evidence="1">Purine metabolism; IMP biosynthesis via de novo pathway; 5-formamido-1-(5-phospho-D-ribosyl)imidazole-4-carboxamide from 5-amino-1-(5-phospho-D-ribosyl)imidazole-4-carboxamide (10-formyl THF route): step 1/1.</text>
</comment>
<comment type="pathway">
    <text evidence="1">Purine metabolism; IMP biosynthesis via de novo pathway; IMP from 5-formamido-1-(5-phospho-D-ribosyl)imidazole-4-carboxamide: step 1/1.</text>
</comment>
<comment type="domain">
    <text evidence="1">The IMP cyclohydrolase activity resides in the N-terminal region.</text>
</comment>
<comment type="similarity">
    <text evidence="1">Belongs to the PurH family.</text>
</comment>
<dbReference type="EC" id="2.1.2.3" evidence="1"/>
<dbReference type="EC" id="3.5.4.10" evidence="1"/>
<dbReference type="EMBL" id="AE013218">
    <property type="protein sequence ID" value="AAM67603.1"/>
    <property type="molecule type" value="Genomic_DNA"/>
</dbReference>
<dbReference type="RefSeq" id="WP_011053569.1">
    <property type="nucleotide sequence ID" value="NC_004061.1"/>
</dbReference>
<dbReference type="SMR" id="Q8KA70"/>
<dbReference type="STRING" id="198804.BUsg_032"/>
<dbReference type="GeneID" id="93003495"/>
<dbReference type="KEGG" id="bas:BUsg_032"/>
<dbReference type="eggNOG" id="COG0138">
    <property type="taxonomic scope" value="Bacteria"/>
</dbReference>
<dbReference type="HOGENOM" id="CLU_016316_5_2_6"/>
<dbReference type="UniPathway" id="UPA00074">
    <property type="reaction ID" value="UER00133"/>
</dbReference>
<dbReference type="UniPathway" id="UPA00074">
    <property type="reaction ID" value="UER00135"/>
</dbReference>
<dbReference type="Proteomes" id="UP000000416">
    <property type="component" value="Chromosome"/>
</dbReference>
<dbReference type="GO" id="GO:0005829">
    <property type="term" value="C:cytosol"/>
    <property type="evidence" value="ECO:0007669"/>
    <property type="project" value="TreeGrafter"/>
</dbReference>
<dbReference type="GO" id="GO:0003937">
    <property type="term" value="F:IMP cyclohydrolase activity"/>
    <property type="evidence" value="ECO:0007669"/>
    <property type="project" value="UniProtKB-UniRule"/>
</dbReference>
<dbReference type="GO" id="GO:0004643">
    <property type="term" value="F:phosphoribosylaminoimidazolecarboxamide formyltransferase activity"/>
    <property type="evidence" value="ECO:0007669"/>
    <property type="project" value="UniProtKB-UniRule"/>
</dbReference>
<dbReference type="GO" id="GO:0006189">
    <property type="term" value="P:'de novo' IMP biosynthetic process"/>
    <property type="evidence" value="ECO:0007669"/>
    <property type="project" value="UniProtKB-UniRule"/>
</dbReference>
<dbReference type="CDD" id="cd01421">
    <property type="entry name" value="IMPCH"/>
    <property type="match status" value="1"/>
</dbReference>
<dbReference type="FunFam" id="3.40.140.20:FF:000001">
    <property type="entry name" value="Bifunctional purine biosynthesis protein PurH"/>
    <property type="match status" value="1"/>
</dbReference>
<dbReference type="FunFam" id="3.40.140.20:FF:000002">
    <property type="entry name" value="Bifunctional purine biosynthesis protein PurH"/>
    <property type="match status" value="1"/>
</dbReference>
<dbReference type="FunFam" id="3.40.50.1380:FF:000001">
    <property type="entry name" value="Bifunctional purine biosynthesis protein PurH"/>
    <property type="match status" value="1"/>
</dbReference>
<dbReference type="Gene3D" id="3.40.140.20">
    <property type="match status" value="2"/>
</dbReference>
<dbReference type="Gene3D" id="3.40.50.1380">
    <property type="entry name" value="Methylglyoxal synthase-like domain"/>
    <property type="match status" value="1"/>
</dbReference>
<dbReference type="HAMAP" id="MF_00139">
    <property type="entry name" value="PurH"/>
    <property type="match status" value="1"/>
</dbReference>
<dbReference type="InterPro" id="IPR024051">
    <property type="entry name" value="AICAR_Tfase_dup_dom_sf"/>
</dbReference>
<dbReference type="InterPro" id="IPR016193">
    <property type="entry name" value="Cytidine_deaminase-like"/>
</dbReference>
<dbReference type="InterPro" id="IPR011607">
    <property type="entry name" value="MGS-like_dom"/>
</dbReference>
<dbReference type="InterPro" id="IPR036914">
    <property type="entry name" value="MGS-like_dom_sf"/>
</dbReference>
<dbReference type="InterPro" id="IPR002695">
    <property type="entry name" value="PurH-like"/>
</dbReference>
<dbReference type="NCBIfam" id="NF002049">
    <property type="entry name" value="PRK00881.1"/>
    <property type="match status" value="1"/>
</dbReference>
<dbReference type="NCBIfam" id="TIGR00355">
    <property type="entry name" value="purH"/>
    <property type="match status" value="1"/>
</dbReference>
<dbReference type="PANTHER" id="PTHR11692:SF0">
    <property type="entry name" value="BIFUNCTIONAL PURINE BIOSYNTHESIS PROTEIN ATIC"/>
    <property type="match status" value="1"/>
</dbReference>
<dbReference type="PANTHER" id="PTHR11692">
    <property type="entry name" value="BIFUNCTIONAL PURINE BIOSYNTHESIS PROTEIN PURH"/>
    <property type="match status" value="1"/>
</dbReference>
<dbReference type="Pfam" id="PF01808">
    <property type="entry name" value="AICARFT_IMPCHas"/>
    <property type="match status" value="1"/>
</dbReference>
<dbReference type="Pfam" id="PF02142">
    <property type="entry name" value="MGS"/>
    <property type="match status" value="1"/>
</dbReference>
<dbReference type="PIRSF" id="PIRSF000414">
    <property type="entry name" value="AICARFT_IMPCHas"/>
    <property type="match status" value="1"/>
</dbReference>
<dbReference type="SMART" id="SM00798">
    <property type="entry name" value="AICARFT_IMPCHas"/>
    <property type="match status" value="1"/>
</dbReference>
<dbReference type="SMART" id="SM00851">
    <property type="entry name" value="MGS"/>
    <property type="match status" value="1"/>
</dbReference>
<dbReference type="SUPFAM" id="SSF53927">
    <property type="entry name" value="Cytidine deaminase-like"/>
    <property type="match status" value="1"/>
</dbReference>
<dbReference type="SUPFAM" id="SSF52335">
    <property type="entry name" value="Methylglyoxal synthase-like"/>
    <property type="match status" value="1"/>
</dbReference>
<dbReference type="PROSITE" id="PS51855">
    <property type="entry name" value="MGS"/>
    <property type="match status" value="1"/>
</dbReference>
<reference key="1">
    <citation type="journal article" date="2002" name="Science">
        <title>50 million years of genomic stasis in endosymbiotic bacteria.</title>
        <authorList>
            <person name="Tamas I."/>
            <person name="Klasson L."/>
            <person name="Canbaeck B."/>
            <person name="Naeslund A.K."/>
            <person name="Eriksson A.-S."/>
            <person name="Wernegreen J.J."/>
            <person name="Sandstroem J.P."/>
            <person name="Moran N.A."/>
            <person name="Andersson S.G.E."/>
        </authorList>
    </citation>
    <scope>NUCLEOTIDE SEQUENCE [LARGE SCALE GENOMIC DNA]</scope>
    <source>
        <strain>Sg</strain>
    </source>
</reference>
<feature type="chain" id="PRO_0000192077" description="Bifunctional purine biosynthesis protein PurH">
    <location>
        <begin position="1"/>
        <end position="526"/>
    </location>
</feature>
<feature type="domain" description="MGS-like" evidence="2">
    <location>
        <begin position="1"/>
        <end position="148"/>
    </location>
</feature>
<organism>
    <name type="scientific">Buchnera aphidicola subsp. Schizaphis graminum (strain Sg)</name>
    <dbReference type="NCBI Taxonomy" id="198804"/>
    <lineage>
        <taxon>Bacteria</taxon>
        <taxon>Pseudomonadati</taxon>
        <taxon>Pseudomonadota</taxon>
        <taxon>Gammaproteobacteria</taxon>
        <taxon>Enterobacterales</taxon>
        <taxon>Erwiniaceae</taxon>
        <taxon>Buchnera</taxon>
    </lineage>
</organism>
<sequence>MSLNNIIKNALVSLSDKTDLLKISKILAEKKINLFCTGGTADVLKKNKIPVLEISDYTNFPEIMNGRLKTLHPKIIGGILGRREKDQKIMKLHNLIPIDIVIVNFYPFEKIQNRKEFTIEEIIDNIDIGGPTLVRAAAKNYKDVIVIVDLSDFTSCIQLINTNTVSLETRFDLATKAFKYTALYEEIISKYFLKKNPYRKKHQKNIFPNEFQLNFIKKQDLRYGENQHQKSSFYIEKEILKSGTISSSNQIQGKNLSYNNICDADIALECVKEFSKPTCVIVKHGNPCGVSESNSLIKAYFSAYNADPISAFGGIIAFNCLLDLDTAQEIVKKQFVEVIIAPEIDEMAVKILKRKKNIRLLICGKIEKNKKGLDFKRITNGLLIQEYDCDEINAKNFDFVTNRLPTEKELEDAIFSWKVAKFVKSNAIVYSLNKTTIGIGAGQTSRIDATKLANLKVKDRNHNNTTGATMASDAFFPFRDGIDNAALIGISCIIQPGGSIRDKEVIESANEHNISMIFTKKRHFKH</sequence>